<gene>
    <name evidence="1" type="primary">queF</name>
    <name type="ordered locus">CJJ81176_0020</name>
</gene>
<evidence type="ECO:0000255" key="1">
    <source>
        <dbReference type="HAMAP-Rule" id="MF_00818"/>
    </source>
</evidence>
<sequence length="127" mass="15040">MRYGEKEIKEFDVENMEIWPNDAKNDYIIKITLPEFMCCCPRSGYPDFATIYLEYMPDKFVVELKAIKLYINTFMYRNVSHEASINEIYNTLKDKLKPKWIKVVGDFNPRGNVHTVIECRSDMVVPK</sequence>
<proteinExistence type="inferred from homology"/>
<dbReference type="EC" id="1.7.1.13" evidence="1"/>
<dbReference type="EMBL" id="CP000538">
    <property type="protein sequence ID" value="EAQ71945.1"/>
    <property type="molecule type" value="Genomic_DNA"/>
</dbReference>
<dbReference type="RefSeq" id="WP_002834281.1">
    <property type="nucleotide sequence ID" value="NC_008787.1"/>
</dbReference>
<dbReference type="SMR" id="A1W1X5"/>
<dbReference type="KEGG" id="cjj:CJJ81176_0020"/>
<dbReference type="eggNOG" id="COG0780">
    <property type="taxonomic scope" value="Bacteria"/>
</dbReference>
<dbReference type="HOGENOM" id="CLU_102489_1_1_7"/>
<dbReference type="UniPathway" id="UPA00392"/>
<dbReference type="Proteomes" id="UP000000646">
    <property type="component" value="Chromosome"/>
</dbReference>
<dbReference type="GO" id="GO:0005737">
    <property type="term" value="C:cytoplasm"/>
    <property type="evidence" value="ECO:0007669"/>
    <property type="project" value="UniProtKB-SubCell"/>
</dbReference>
<dbReference type="GO" id="GO:0033739">
    <property type="term" value="F:preQ1 synthase activity"/>
    <property type="evidence" value="ECO:0007669"/>
    <property type="project" value="UniProtKB-UniRule"/>
</dbReference>
<dbReference type="GO" id="GO:0008616">
    <property type="term" value="P:queuosine biosynthetic process"/>
    <property type="evidence" value="ECO:0007669"/>
    <property type="project" value="UniProtKB-UniRule"/>
</dbReference>
<dbReference type="GO" id="GO:0006400">
    <property type="term" value="P:tRNA modification"/>
    <property type="evidence" value="ECO:0007669"/>
    <property type="project" value="UniProtKB-UniRule"/>
</dbReference>
<dbReference type="Gene3D" id="3.30.1130.10">
    <property type="match status" value="1"/>
</dbReference>
<dbReference type="HAMAP" id="MF_00818">
    <property type="entry name" value="QueF_type1"/>
    <property type="match status" value="1"/>
</dbReference>
<dbReference type="InterPro" id="IPR043133">
    <property type="entry name" value="GTP-CH-I_C/QueF"/>
</dbReference>
<dbReference type="InterPro" id="IPR050084">
    <property type="entry name" value="NADPH_dep_7-cyano-7-deazaG_red"/>
</dbReference>
<dbReference type="InterPro" id="IPR029500">
    <property type="entry name" value="QueF"/>
</dbReference>
<dbReference type="InterPro" id="IPR016856">
    <property type="entry name" value="QueF_type1"/>
</dbReference>
<dbReference type="NCBIfam" id="TIGR03139">
    <property type="entry name" value="QueF-II"/>
    <property type="match status" value="1"/>
</dbReference>
<dbReference type="PANTHER" id="PTHR34354">
    <property type="entry name" value="NADPH-DEPENDENT 7-CYANO-7-DEAZAGUANINE REDUCTASE"/>
    <property type="match status" value="1"/>
</dbReference>
<dbReference type="PANTHER" id="PTHR34354:SF1">
    <property type="entry name" value="NADPH-DEPENDENT 7-CYANO-7-DEAZAGUANINE REDUCTASE"/>
    <property type="match status" value="1"/>
</dbReference>
<dbReference type="Pfam" id="PF14489">
    <property type="entry name" value="QueF"/>
    <property type="match status" value="1"/>
</dbReference>
<dbReference type="PIRSF" id="PIRSF027377">
    <property type="entry name" value="Nitrile_oxidored_QueF"/>
    <property type="match status" value="1"/>
</dbReference>
<dbReference type="SUPFAM" id="SSF55620">
    <property type="entry name" value="Tetrahydrobiopterin biosynthesis enzymes-like"/>
    <property type="match status" value="1"/>
</dbReference>
<accession>A1W1X5</accession>
<protein>
    <recommendedName>
        <fullName evidence="1">NADPH-dependent 7-cyano-7-deazaguanine reductase</fullName>
        <ecNumber evidence="1">1.7.1.13</ecNumber>
    </recommendedName>
    <alternativeName>
        <fullName evidence="1">7-cyano-7-carbaguanine reductase</fullName>
    </alternativeName>
    <alternativeName>
        <fullName evidence="1">NADPH-dependent nitrile oxidoreductase</fullName>
    </alternativeName>
    <alternativeName>
        <fullName evidence="1">PreQ(0) reductase</fullName>
    </alternativeName>
</protein>
<organism>
    <name type="scientific">Campylobacter jejuni subsp. jejuni serotype O:23/36 (strain 81-176)</name>
    <dbReference type="NCBI Taxonomy" id="354242"/>
    <lineage>
        <taxon>Bacteria</taxon>
        <taxon>Pseudomonadati</taxon>
        <taxon>Campylobacterota</taxon>
        <taxon>Epsilonproteobacteria</taxon>
        <taxon>Campylobacterales</taxon>
        <taxon>Campylobacteraceae</taxon>
        <taxon>Campylobacter</taxon>
    </lineage>
</organism>
<name>QUEF_CAMJJ</name>
<keyword id="KW-0963">Cytoplasm</keyword>
<keyword id="KW-0521">NADP</keyword>
<keyword id="KW-0560">Oxidoreductase</keyword>
<keyword id="KW-0671">Queuosine biosynthesis</keyword>
<comment type="function">
    <text evidence="1">Catalyzes the NADPH-dependent reduction of 7-cyano-7-deazaguanine (preQ0) to 7-aminomethyl-7-deazaguanine (preQ1).</text>
</comment>
<comment type="catalytic activity">
    <reaction evidence="1">
        <text>7-aminomethyl-7-carbaguanine + 2 NADP(+) = 7-cyano-7-deazaguanine + 2 NADPH + 3 H(+)</text>
        <dbReference type="Rhea" id="RHEA:13409"/>
        <dbReference type="ChEBI" id="CHEBI:15378"/>
        <dbReference type="ChEBI" id="CHEBI:45075"/>
        <dbReference type="ChEBI" id="CHEBI:57783"/>
        <dbReference type="ChEBI" id="CHEBI:58349"/>
        <dbReference type="ChEBI" id="CHEBI:58703"/>
        <dbReference type="EC" id="1.7.1.13"/>
    </reaction>
</comment>
<comment type="pathway">
    <text evidence="1">tRNA modification; tRNA-queuosine biosynthesis.</text>
</comment>
<comment type="subcellular location">
    <subcellularLocation>
        <location evidence="1">Cytoplasm</location>
    </subcellularLocation>
</comment>
<comment type="similarity">
    <text evidence="1">Belongs to the GTP cyclohydrolase I family. QueF type 1 subfamily.</text>
</comment>
<feature type="chain" id="PRO_1000062381" description="NADPH-dependent 7-cyano-7-deazaguanine reductase">
    <location>
        <begin position="1"/>
        <end position="127"/>
    </location>
</feature>
<feature type="active site" description="Thioimide intermediate" evidence="1">
    <location>
        <position position="40"/>
    </location>
</feature>
<feature type="active site" description="Proton donor" evidence="1">
    <location>
        <position position="47"/>
    </location>
</feature>
<feature type="binding site" evidence="1">
    <location>
        <begin position="62"/>
        <end position="64"/>
    </location>
    <ligand>
        <name>substrate</name>
    </ligand>
</feature>
<feature type="binding site" evidence="1">
    <location>
        <begin position="81"/>
        <end position="82"/>
    </location>
    <ligand>
        <name>substrate</name>
    </ligand>
</feature>
<reference key="1">
    <citation type="submission" date="2006-12" db="EMBL/GenBank/DDBJ databases">
        <authorList>
            <person name="Fouts D.E."/>
            <person name="Nelson K.E."/>
            <person name="Sebastian Y."/>
        </authorList>
    </citation>
    <scope>NUCLEOTIDE SEQUENCE [LARGE SCALE GENOMIC DNA]</scope>
    <source>
        <strain>81-176</strain>
    </source>
</reference>